<organism>
    <name type="scientific">Salmonella choleraesuis (strain SC-B67)</name>
    <dbReference type="NCBI Taxonomy" id="321314"/>
    <lineage>
        <taxon>Bacteria</taxon>
        <taxon>Pseudomonadati</taxon>
        <taxon>Pseudomonadota</taxon>
        <taxon>Gammaproteobacteria</taxon>
        <taxon>Enterobacterales</taxon>
        <taxon>Enterobacteriaceae</taxon>
        <taxon>Salmonella</taxon>
    </lineage>
</organism>
<protein>
    <recommendedName>
        <fullName evidence="1">Succinylornithine transaminase</fullName>
        <shortName>SOAT</shortName>
        <ecNumber evidence="1">2.6.1.81</ecNumber>
    </recommendedName>
    <alternativeName>
        <fullName evidence="1">Succinylornithine aminotransferase</fullName>
    </alternativeName>
</protein>
<keyword id="KW-0032">Aminotransferase</keyword>
<keyword id="KW-0056">Arginine metabolism</keyword>
<keyword id="KW-0663">Pyridoxal phosphate</keyword>
<keyword id="KW-0808">Transferase</keyword>
<dbReference type="EC" id="2.6.1.81" evidence="1"/>
<dbReference type="EMBL" id="AE017220">
    <property type="protein sequence ID" value="AAX65232.1"/>
    <property type="molecule type" value="Genomic_DNA"/>
</dbReference>
<dbReference type="RefSeq" id="WP_001539867.1">
    <property type="nucleotide sequence ID" value="NC_006905.1"/>
</dbReference>
<dbReference type="SMR" id="Q57PX9"/>
<dbReference type="KEGG" id="sec:SCH_1326"/>
<dbReference type="HOGENOM" id="CLU_016922_10_1_6"/>
<dbReference type="UniPathway" id="UPA00185">
    <property type="reaction ID" value="UER00281"/>
</dbReference>
<dbReference type="Proteomes" id="UP000000538">
    <property type="component" value="Chromosome"/>
</dbReference>
<dbReference type="GO" id="GO:0042802">
    <property type="term" value="F:identical protein binding"/>
    <property type="evidence" value="ECO:0007669"/>
    <property type="project" value="TreeGrafter"/>
</dbReference>
<dbReference type="GO" id="GO:0030170">
    <property type="term" value="F:pyridoxal phosphate binding"/>
    <property type="evidence" value="ECO:0007669"/>
    <property type="project" value="UniProtKB-UniRule"/>
</dbReference>
<dbReference type="GO" id="GO:0043825">
    <property type="term" value="F:succinylornithine transaminase activity"/>
    <property type="evidence" value="ECO:0007669"/>
    <property type="project" value="UniProtKB-EC"/>
</dbReference>
<dbReference type="GO" id="GO:1901607">
    <property type="term" value="P:alpha-amino acid biosynthetic process"/>
    <property type="evidence" value="ECO:0007669"/>
    <property type="project" value="UniProtKB-ARBA"/>
</dbReference>
<dbReference type="GO" id="GO:0019544">
    <property type="term" value="P:arginine catabolic process to glutamate"/>
    <property type="evidence" value="ECO:0007669"/>
    <property type="project" value="UniProtKB-UniRule"/>
</dbReference>
<dbReference type="GO" id="GO:0019545">
    <property type="term" value="P:arginine catabolic process to succinate"/>
    <property type="evidence" value="ECO:0007669"/>
    <property type="project" value="UniProtKB-UniRule"/>
</dbReference>
<dbReference type="GO" id="GO:0006593">
    <property type="term" value="P:ornithine catabolic process"/>
    <property type="evidence" value="ECO:0007669"/>
    <property type="project" value="InterPro"/>
</dbReference>
<dbReference type="CDD" id="cd00610">
    <property type="entry name" value="OAT_like"/>
    <property type="match status" value="1"/>
</dbReference>
<dbReference type="FunFam" id="3.40.640.10:FF:000004">
    <property type="entry name" value="Acetylornithine aminotransferase"/>
    <property type="match status" value="1"/>
</dbReference>
<dbReference type="Gene3D" id="3.90.1150.10">
    <property type="entry name" value="Aspartate Aminotransferase, domain 1"/>
    <property type="match status" value="1"/>
</dbReference>
<dbReference type="Gene3D" id="3.40.640.10">
    <property type="entry name" value="Type I PLP-dependent aspartate aminotransferase-like (Major domain)"/>
    <property type="match status" value="1"/>
</dbReference>
<dbReference type="HAMAP" id="MF_01107">
    <property type="entry name" value="ArgD_aminotrans_3"/>
    <property type="match status" value="1"/>
</dbReference>
<dbReference type="HAMAP" id="MF_01173">
    <property type="entry name" value="AstC_aminotrans_3"/>
    <property type="match status" value="1"/>
</dbReference>
<dbReference type="InterPro" id="IPR017652">
    <property type="entry name" value="Ac/SucOrn_transaminase_bac"/>
</dbReference>
<dbReference type="InterPro" id="IPR004636">
    <property type="entry name" value="AcOrn/SuccOrn_fam"/>
</dbReference>
<dbReference type="InterPro" id="IPR005814">
    <property type="entry name" value="Aminotrans_3"/>
</dbReference>
<dbReference type="InterPro" id="IPR049704">
    <property type="entry name" value="Aminotrans_3_PPA_site"/>
</dbReference>
<dbReference type="InterPro" id="IPR050103">
    <property type="entry name" value="Class-III_PLP-dep_AT"/>
</dbReference>
<dbReference type="InterPro" id="IPR015424">
    <property type="entry name" value="PyrdxlP-dep_Trfase"/>
</dbReference>
<dbReference type="InterPro" id="IPR015421">
    <property type="entry name" value="PyrdxlP-dep_Trfase_major"/>
</dbReference>
<dbReference type="InterPro" id="IPR015422">
    <property type="entry name" value="PyrdxlP-dep_Trfase_small"/>
</dbReference>
<dbReference type="InterPro" id="IPR001763">
    <property type="entry name" value="Rhodanese-like_dom"/>
</dbReference>
<dbReference type="InterPro" id="IPR026330">
    <property type="entry name" value="SOAT"/>
</dbReference>
<dbReference type="NCBIfam" id="TIGR03246">
    <property type="entry name" value="arg_catab_astC"/>
    <property type="match status" value="1"/>
</dbReference>
<dbReference type="NCBIfam" id="TIGR00707">
    <property type="entry name" value="argD"/>
    <property type="match status" value="1"/>
</dbReference>
<dbReference type="NCBIfam" id="NF002325">
    <property type="entry name" value="PRK01278.1"/>
    <property type="match status" value="1"/>
</dbReference>
<dbReference type="NCBIfam" id="NF003468">
    <property type="entry name" value="PRK05093.1"/>
    <property type="match status" value="1"/>
</dbReference>
<dbReference type="NCBIfam" id="NF009047">
    <property type="entry name" value="PRK12381.1"/>
    <property type="match status" value="1"/>
</dbReference>
<dbReference type="PANTHER" id="PTHR11986">
    <property type="entry name" value="AMINOTRANSFERASE CLASS III"/>
    <property type="match status" value="1"/>
</dbReference>
<dbReference type="PANTHER" id="PTHR11986:SF113">
    <property type="entry name" value="SUCCINYLORNITHINE TRANSAMINASE"/>
    <property type="match status" value="1"/>
</dbReference>
<dbReference type="Pfam" id="PF00202">
    <property type="entry name" value="Aminotran_3"/>
    <property type="match status" value="1"/>
</dbReference>
<dbReference type="PIRSF" id="PIRSF000521">
    <property type="entry name" value="Transaminase_4ab_Lys_Orn"/>
    <property type="match status" value="1"/>
</dbReference>
<dbReference type="SUPFAM" id="SSF53383">
    <property type="entry name" value="PLP-dependent transferases"/>
    <property type="match status" value="1"/>
</dbReference>
<dbReference type="PROSITE" id="PS00600">
    <property type="entry name" value="AA_TRANSFER_CLASS_3"/>
    <property type="match status" value="1"/>
</dbReference>
<gene>
    <name evidence="1" type="primary">astC</name>
    <name evidence="1" type="synonym">argM</name>
    <name type="ordered locus">SCH_1326</name>
</gene>
<feature type="chain" id="PRO_0000262441" description="Succinylornithine transaminase">
    <location>
        <begin position="1"/>
        <end position="408"/>
    </location>
</feature>
<feature type="modified residue" description="N6-(pyridoxal phosphate)lysine" evidence="1">
    <location>
        <position position="252"/>
    </location>
</feature>
<reference key="1">
    <citation type="journal article" date="2005" name="Nucleic Acids Res.">
        <title>The genome sequence of Salmonella enterica serovar Choleraesuis, a highly invasive and resistant zoonotic pathogen.</title>
        <authorList>
            <person name="Chiu C.-H."/>
            <person name="Tang P."/>
            <person name="Chu C."/>
            <person name="Hu S."/>
            <person name="Bao Q."/>
            <person name="Yu J."/>
            <person name="Chou Y.-Y."/>
            <person name="Wang H.-S."/>
            <person name="Lee Y.-S."/>
        </authorList>
    </citation>
    <scope>NUCLEOTIDE SEQUENCE [LARGE SCALE GENOMIC DNA]</scope>
    <source>
        <strain>SC-B67</strain>
    </source>
</reference>
<name>ASTC_SALCH</name>
<proteinExistence type="inferred from homology"/>
<sequence>MSLSVTRENFDEWMVPVYVPAPFIPVRGEGSRLWEQQGKEYIDFAGGIAVNALGHAHPALREALNEQANRFWHTGNGYTNEPALRLAKKLIDATFAERVFFCNSGAEANEAALKLARKYAHDRVGNHKSGIVAFKNAFHGRTLFTVSAGGQPTYSQDFAPLPPDIRHAAYNDLNSASALIDDNTCAVIVEPVQGEGGVIPATKAFLQGLRELCDRHQALLIFDEVQTGVGRTGELYAYMHYGVTPDILTTAKALGGGFPIGAMLTTQDYASVMTPGTHGTTYGGNPLATAVAGKVLDIINTPEMQNGVRQRHDAFIERLNTINVRFGMFSEIRGLGLLLGCVLQTEFAGKAKLIAQEAAKAGVMVLIAGGDVVRFAPALNVSDEEIATGLDRFALACERLQTGGASCG</sequence>
<comment type="function">
    <text evidence="1">Catalyzes the transamination of N(2)-succinylornithine and alpha-ketoglutarate into N(2)-succinylglutamate semialdehyde and glutamate. Can also act as an acetylornithine aminotransferase.</text>
</comment>
<comment type="catalytic activity">
    <reaction evidence="1">
        <text>N(2)-succinyl-L-ornithine + 2-oxoglutarate = N-succinyl-L-glutamate 5-semialdehyde + L-glutamate</text>
        <dbReference type="Rhea" id="RHEA:16953"/>
        <dbReference type="ChEBI" id="CHEBI:16810"/>
        <dbReference type="ChEBI" id="CHEBI:29985"/>
        <dbReference type="ChEBI" id="CHEBI:58514"/>
        <dbReference type="ChEBI" id="CHEBI:58520"/>
        <dbReference type="EC" id="2.6.1.81"/>
    </reaction>
</comment>
<comment type="cofactor">
    <cofactor evidence="1">
        <name>pyridoxal 5'-phosphate</name>
        <dbReference type="ChEBI" id="CHEBI:597326"/>
    </cofactor>
</comment>
<comment type="pathway">
    <text evidence="1">Amino-acid degradation; L-arginine degradation via AST pathway; L-glutamate and succinate from L-arginine: step 3/5.</text>
</comment>
<comment type="similarity">
    <text evidence="1">Belongs to the class-III pyridoxal-phosphate-dependent aminotransferase family. AstC subfamily.</text>
</comment>
<evidence type="ECO:0000255" key="1">
    <source>
        <dbReference type="HAMAP-Rule" id="MF_01173"/>
    </source>
</evidence>
<accession>Q57PX9</accession>